<dbReference type="EC" id="2.4.2.14" evidence="2"/>
<dbReference type="EMBL" id="U15182">
    <property type="protein sequence ID" value="AAA62988.1"/>
    <property type="molecule type" value="Genomic_DNA"/>
</dbReference>
<dbReference type="EMBL" id="Z95151">
    <property type="protein sequence ID" value="CAB08437.1"/>
    <property type="molecule type" value="Genomic_DNA"/>
</dbReference>
<dbReference type="EMBL" id="AL583924">
    <property type="protein sequence ID" value="CAC31161.1"/>
    <property type="molecule type" value="Genomic_DNA"/>
</dbReference>
<dbReference type="PIR" id="A87185">
    <property type="entry name" value="A87185"/>
</dbReference>
<dbReference type="RefSeq" id="NP_302447.1">
    <property type="nucleotide sequence ID" value="NC_002677.1"/>
</dbReference>
<dbReference type="SMR" id="Q50028"/>
<dbReference type="STRING" id="272631.gene:17576063"/>
<dbReference type="MEROPS" id="C44.001"/>
<dbReference type="KEGG" id="mle:ML2206"/>
<dbReference type="PATRIC" id="fig|272631.5.peg.4178"/>
<dbReference type="Leproma" id="ML2206"/>
<dbReference type="eggNOG" id="COG0034">
    <property type="taxonomic scope" value="Bacteria"/>
</dbReference>
<dbReference type="HOGENOM" id="CLU_022389_3_2_11"/>
<dbReference type="OrthoDB" id="9801213at2"/>
<dbReference type="UniPathway" id="UPA00074">
    <property type="reaction ID" value="UER00124"/>
</dbReference>
<dbReference type="Proteomes" id="UP000000806">
    <property type="component" value="Chromosome"/>
</dbReference>
<dbReference type="GO" id="GO:0051539">
    <property type="term" value="F:4 iron, 4 sulfur cluster binding"/>
    <property type="evidence" value="ECO:0007669"/>
    <property type="project" value="UniProtKB-KW"/>
</dbReference>
<dbReference type="GO" id="GO:0004044">
    <property type="term" value="F:amidophosphoribosyltransferase activity"/>
    <property type="evidence" value="ECO:0007669"/>
    <property type="project" value="UniProtKB-UniRule"/>
</dbReference>
<dbReference type="GO" id="GO:0000287">
    <property type="term" value="F:magnesium ion binding"/>
    <property type="evidence" value="ECO:0007669"/>
    <property type="project" value="UniProtKB-UniRule"/>
</dbReference>
<dbReference type="GO" id="GO:0006189">
    <property type="term" value="P:'de novo' IMP biosynthetic process"/>
    <property type="evidence" value="ECO:0007669"/>
    <property type="project" value="UniProtKB-UniRule"/>
</dbReference>
<dbReference type="GO" id="GO:0009113">
    <property type="term" value="P:purine nucleobase biosynthetic process"/>
    <property type="evidence" value="ECO:0007669"/>
    <property type="project" value="InterPro"/>
</dbReference>
<dbReference type="CDD" id="cd00715">
    <property type="entry name" value="GPATase_N"/>
    <property type="match status" value="1"/>
</dbReference>
<dbReference type="CDD" id="cd06223">
    <property type="entry name" value="PRTases_typeI"/>
    <property type="match status" value="1"/>
</dbReference>
<dbReference type="Gene3D" id="3.40.50.2020">
    <property type="match status" value="1"/>
</dbReference>
<dbReference type="Gene3D" id="3.60.20.10">
    <property type="entry name" value="Glutamine Phosphoribosylpyrophosphate, subunit 1, domain 1"/>
    <property type="match status" value="1"/>
</dbReference>
<dbReference type="HAMAP" id="MF_01931">
    <property type="entry name" value="PurF"/>
    <property type="match status" value="1"/>
</dbReference>
<dbReference type="InterPro" id="IPR017932">
    <property type="entry name" value="GATase_2_dom"/>
</dbReference>
<dbReference type="InterPro" id="IPR029055">
    <property type="entry name" value="Ntn_hydrolases_N"/>
</dbReference>
<dbReference type="InterPro" id="IPR000836">
    <property type="entry name" value="PRibTrfase_dom"/>
</dbReference>
<dbReference type="InterPro" id="IPR029057">
    <property type="entry name" value="PRTase-like"/>
</dbReference>
<dbReference type="InterPro" id="IPR005854">
    <property type="entry name" value="PurF"/>
</dbReference>
<dbReference type="InterPro" id="IPR035584">
    <property type="entry name" value="PurF_N"/>
</dbReference>
<dbReference type="NCBIfam" id="TIGR01134">
    <property type="entry name" value="purF"/>
    <property type="match status" value="1"/>
</dbReference>
<dbReference type="PANTHER" id="PTHR11907">
    <property type="entry name" value="AMIDOPHOSPHORIBOSYLTRANSFERASE"/>
    <property type="match status" value="1"/>
</dbReference>
<dbReference type="Pfam" id="PF13522">
    <property type="entry name" value="GATase_6"/>
    <property type="match status" value="1"/>
</dbReference>
<dbReference type="PIRSF" id="PIRSF000485">
    <property type="entry name" value="Amd_phspho_trans"/>
    <property type="match status" value="1"/>
</dbReference>
<dbReference type="SUPFAM" id="SSF56235">
    <property type="entry name" value="N-terminal nucleophile aminohydrolases (Ntn hydrolases)"/>
    <property type="match status" value="1"/>
</dbReference>
<dbReference type="SUPFAM" id="SSF53271">
    <property type="entry name" value="PRTase-like"/>
    <property type="match status" value="1"/>
</dbReference>
<dbReference type="PROSITE" id="PS51278">
    <property type="entry name" value="GATASE_TYPE_2"/>
    <property type="match status" value="1"/>
</dbReference>
<dbReference type="PROSITE" id="PS00103">
    <property type="entry name" value="PUR_PYR_PR_TRANSFER"/>
    <property type="match status" value="1"/>
</dbReference>
<protein>
    <recommendedName>
        <fullName evidence="2">Amidophosphoribosyltransferase</fullName>
        <shortName evidence="2">ATase</shortName>
        <ecNumber evidence="2">2.4.2.14</ecNumber>
    </recommendedName>
    <alternativeName>
        <fullName evidence="2">Glutamine phosphoribosylpyrophosphate amidotransferase</fullName>
        <shortName evidence="2">GPATase</shortName>
    </alternativeName>
</protein>
<accession>Q50028</accession>
<accession>O05762</accession>
<keyword id="KW-0004">4Fe-4S</keyword>
<keyword id="KW-0315">Glutamine amidotransferase</keyword>
<keyword id="KW-0328">Glycosyltransferase</keyword>
<keyword id="KW-0408">Iron</keyword>
<keyword id="KW-0411">Iron-sulfur</keyword>
<keyword id="KW-0460">Magnesium</keyword>
<keyword id="KW-0479">Metal-binding</keyword>
<keyword id="KW-0658">Purine biosynthesis</keyword>
<keyword id="KW-1185">Reference proteome</keyword>
<keyword id="KW-0808">Transferase</keyword>
<feature type="propeptide" id="PRO_0000029255" evidence="1">
    <location>
        <begin position="1"/>
        <end position="57"/>
    </location>
</feature>
<feature type="chain" id="PRO_0000029256" description="Amidophosphoribosyltransferase">
    <location>
        <begin position="58"/>
        <end position="556"/>
    </location>
</feature>
<feature type="domain" description="Glutamine amidotransferase type-2" evidence="2">
    <location>
        <begin position="58"/>
        <end position="284"/>
    </location>
</feature>
<feature type="active site" description="Nucleophile" evidence="2">
    <location>
        <position position="58"/>
    </location>
</feature>
<feature type="binding site" evidence="2">
    <location>
        <position position="299"/>
    </location>
    <ligand>
        <name>[4Fe-4S] cluster</name>
        <dbReference type="ChEBI" id="CHEBI:49883"/>
    </ligand>
</feature>
<feature type="binding site" evidence="2">
    <location>
        <position position="346"/>
    </location>
    <ligand>
        <name>Mg(2+)</name>
        <dbReference type="ChEBI" id="CHEBI:18420"/>
    </ligand>
</feature>
<feature type="binding site" evidence="2">
    <location>
        <position position="408"/>
    </location>
    <ligand>
        <name>Mg(2+)</name>
        <dbReference type="ChEBI" id="CHEBI:18420"/>
    </ligand>
</feature>
<feature type="binding site" evidence="2">
    <location>
        <position position="409"/>
    </location>
    <ligand>
        <name>Mg(2+)</name>
        <dbReference type="ChEBI" id="CHEBI:18420"/>
    </ligand>
</feature>
<feature type="binding site" evidence="2">
    <location>
        <position position="445"/>
    </location>
    <ligand>
        <name>[4Fe-4S] cluster</name>
        <dbReference type="ChEBI" id="CHEBI:49883"/>
    </ligand>
</feature>
<feature type="binding site" evidence="2">
    <location>
        <position position="501"/>
    </location>
    <ligand>
        <name>[4Fe-4S] cluster</name>
        <dbReference type="ChEBI" id="CHEBI:49883"/>
    </ligand>
</feature>
<feature type="binding site" evidence="2">
    <location>
        <position position="504"/>
    </location>
    <ligand>
        <name>[4Fe-4S] cluster</name>
        <dbReference type="ChEBI" id="CHEBI:49883"/>
    </ligand>
</feature>
<name>PUR1_MYCLE</name>
<organism>
    <name type="scientific">Mycobacterium leprae (strain TN)</name>
    <dbReference type="NCBI Taxonomy" id="272631"/>
    <lineage>
        <taxon>Bacteria</taxon>
        <taxon>Bacillati</taxon>
        <taxon>Actinomycetota</taxon>
        <taxon>Actinomycetes</taxon>
        <taxon>Mycobacteriales</taxon>
        <taxon>Mycobacteriaceae</taxon>
        <taxon>Mycobacterium</taxon>
    </lineage>
</organism>
<comment type="function">
    <text evidence="2">Catalyzes the formation of phosphoribosylamine from phosphoribosylpyrophosphate (PRPP) and glutamine.</text>
</comment>
<comment type="catalytic activity">
    <reaction evidence="2">
        <text>5-phospho-beta-D-ribosylamine + L-glutamate + diphosphate = 5-phospho-alpha-D-ribose 1-diphosphate + L-glutamine + H2O</text>
        <dbReference type="Rhea" id="RHEA:14905"/>
        <dbReference type="ChEBI" id="CHEBI:15377"/>
        <dbReference type="ChEBI" id="CHEBI:29985"/>
        <dbReference type="ChEBI" id="CHEBI:33019"/>
        <dbReference type="ChEBI" id="CHEBI:58017"/>
        <dbReference type="ChEBI" id="CHEBI:58359"/>
        <dbReference type="ChEBI" id="CHEBI:58681"/>
        <dbReference type="EC" id="2.4.2.14"/>
    </reaction>
</comment>
<comment type="cofactor">
    <cofactor evidence="2">
        <name>Mg(2+)</name>
        <dbReference type="ChEBI" id="CHEBI:18420"/>
    </cofactor>
    <text evidence="2">Binds 1 Mg(2+) ion per subunit.</text>
</comment>
<comment type="cofactor">
    <cofactor evidence="2">
        <name>[4Fe-4S] cluster</name>
        <dbReference type="ChEBI" id="CHEBI:49883"/>
    </cofactor>
    <text evidence="2">Binds 1 [4Fe-4S] cluster per subunit.</text>
</comment>
<comment type="pathway">
    <text evidence="2">Purine metabolism; IMP biosynthesis via de novo pathway; N(1)-(5-phospho-D-ribosyl)glycinamide from 5-phospho-alpha-D-ribose 1-diphosphate: step 1/2.</text>
</comment>
<comment type="similarity">
    <text evidence="2">In the C-terminal section; belongs to the purine/pyrimidine phosphoribosyltransferase family.</text>
</comment>
<sequence length="556" mass="59540">MCLAVGVGVRAPKHVPQIRRLGRAGRRLRCVTNCALGSCPIVTVQQPGRDFSSPREECGVFGVWAPGELVAKLTYFGLYALQHRGQEAAGIAVADGSQVLVFKDLGLVSQVFDEQTLAAMEGHVAIGHCRYSTTGDTTWENAQPVFRNIAAGSGVALGHNGNLVNTAELAARARDAGLIAKRCPAPATTDSDILGALLAHGAADSTLEQAALELLPTVRGAFCLTFMDENTLYACRDPYGVRPLSLGRLDRGWVVASETAGLDIVGASFVRDIEPGELLAIDADGVRSTRFANPTPKGCVFEYVYLARPDSTLAGRSVHGTRVEIGRRLARECPVEADLVIGVPESGTPAAVGYAQESGISYGQGLMKNAYVGRTFIQPSQTIRQLGIRLKLNPLKEVIRGKRLIVVDDSVVRGNTQRALVRMLREAGAVELHVRIASPPVKWPCFYGIDFPSPAELIANVVADEEEMLEAVRQGIGADTLGYISLRGMIAASEQPASRLCYACFDGRYPIELPSEAMLGKNVIEHMLANAARGAGLRDLAADQVPVDADENCVWR</sequence>
<proteinExistence type="inferred from homology"/>
<gene>
    <name evidence="2" type="primary">purF</name>
    <name type="ordered locus">ML2206</name>
    <name type="ORF">MLCB5.38</name>
</gene>
<reference key="1">
    <citation type="submission" date="1994-09" db="EMBL/GenBank/DDBJ databases">
        <authorList>
            <person name="Smith D.R."/>
            <person name="Robison K."/>
        </authorList>
    </citation>
    <scope>NUCLEOTIDE SEQUENCE [GENOMIC DNA]</scope>
</reference>
<reference key="2">
    <citation type="journal article" date="2001" name="Nature">
        <title>Massive gene decay in the leprosy bacillus.</title>
        <authorList>
            <person name="Cole S.T."/>
            <person name="Eiglmeier K."/>
            <person name="Parkhill J."/>
            <person name="James K.D."/>
            <person name="Thomson N.R."/>
            <person name="Wheeler P.R."/>
            <person name="Honore N."/>
            <person name="Garnier T."/>
            <person name="Churcher C.M."/>
            <person name="Harris D.E."/>
            <person name="Mungall K.L."/>
            <person name="Basham D."/>
            <person name="Brown D."/>
            <person name="Chillingworth T."/>
            <person name="Connor R."/>
            <person name="Davies R.M."/>
            <person name="Devlin K."/>
            <person name="Duthoy S."/>
            <person name="Feltwell T."/>
            <person name="Fraser A."/>
            <person name="Hamlin N."/>
            <person name="Holroyd S."/>
            <person name="Hornsby T."/>
            <person name="Jagels K."/>
            <person name="Lacroix C."/>
            <person name="Maclean J."/>
            <person name="Moule S."/>
            <person name="Murphy L.D."/>
            <person name="Oliver K."/>
            <person name="Quail M.A."/>
            <person name="Rajandream M.A."/>
            <person name="Rutherford K.M."/>
            <person name="Rutter S."/>
            <person name="Seeger K."/>
            <person name="Simon S."/>
            <person name="Simmonds M."/>
            <person name="Skelton J."/>
            <person name="Squares R."/>
            <person name="Squares S."/>
            <person name="Stevens K."/>
            <person name="Taylor K."/>
            <person name="Whitehead S."/>
            <person name="Woodward J.R."/>
            <person name="Barrell B.G."/>
        </authorList>
    </citation>
    <scope>NUCLEOTIDE SEQUENCE [LARGE SCALE GENOMIC DNA]</scope>
    <source>
        <strain>TN</strain>
    </source>
</reference>
<evidence type="ECO:0000250" key="1"/>
<evidence type="ECO:0000255" key="2">
    <source>
        <dbReference type="HAMAP-Rule" id="MF_01931"/>
    </source>
</evidence>